<feature type="chain" id="PRO_0000263114" description="tRNA (cytosine(72)-C(5))-methyltransferase NSUN6">
    <location>
        <begin position="1"/>
        <end position="469"/>
    </location>
</feature>
<feature type="domain" description="PUA" evidence="1">
    <location>
        <begin position="111"/>
        <end position="203"/>
    </location>
</feature>
<feature type="active site" description="Nucleophile" evidence="2 5 11">
    <location>
        <position position="373"/>
    </location>
</feature>
<feature type="binding site" evidence="2 5 11">
    <location>
        <begin position="242"/>
        <end position="248"/>
    </location>
    <ligand>
        <name>S-adenosyl-L-methionine</name>
        <dbReference type="ChEBI" id="CHEBI:59789"/>
    </ligand>
</feature>
<feature type="binding site" evidence="2 5 11">
    <location>
        <position position="266"/>
    </location>
    <ligand>
        <name>S-adenosyl-L-methionine</name>
        <dbReference type="ChEBI" id="CHEBI:59789"/>
    </ligand>
</feature>
<feature type="binding site" evidence="2">
    <location>
        <position position="293"/>
    </location>
    <ligand>
        <name>S-adenosyl-L-methionine</name>
        <dbReference type="ChEBI" id="CHEBI:59789"/>
    </ligand>
</feature>
<feature type="binding site" evidence="2 5 11">
    <location>
        <position position="323"/>
    </location>
    <ligand>
        <name>S-adenosyl-L-methionine</name>
        <dbReference type="ChEBI" id="CHEBI:59789"/>
    </ligand>
</feature>
<feature type="modified residue" description="N6-acetyllysine" evidence="13">
    <location>
        <position position="419"/>
    </location>
</feature>
<feature type="sequence variant" id="VAR_089529" description="In MRT82; likely pathogenic; abolishes tRNA methyltransferase activity; abolishes S-Adenosylmethionine binding; dbSNP:rs774705707." evidence="6">
    <original>D</original>
    <variation>N</variation>
    <location>
        <position position="323"/>
    </location>
</feature>
<feature type="mutagenesis site" description="Decreases substantially tRNA methyltransferase activity." evidence="5">
    <original>R</original>
    <variation>A</variation>
    <location>
        <position position="126"/>
    </location>
</feature>
<feature type="mutagenesis site" description="Abolishes methylation of tRNA (Cys)." evidence="5">
    <original>Y</original>
    <variation>A</variation>
    <location>
        <position position="131"/>
    </location>
</feature>
<feature type="mutagenesis site" description="Decreases tRNA methyltransferase activity. Abolishes tRNA methyltransferase activity; when associated with A-181." evidence="5">
    <original>K</original>
    <variation>A</variation>
    <location>
        <position position="159"/>
    </location>
</feature>
<feature type="mutagenesis site" description="Decreases tRNA methyltransferase activity. Abolishes tRNA methyltransferase activity; when associated with A-181." evidence="5">
    <original>K</original>
    <variation>A</variation>
    <location>
        <position position="160"/>
    </location>
</feature>
<feature type="mutagenesis site" description="Substantially decreases tRNA methyltransferase activity." evidence="5">
    <original>R</original>
    <variation>A</variation>
    <location>
        <position position="181"/>
    </location>
</feature>
<feature type="mutagenesis site" description="Decreases substantially tRNA methyltransferase activity." evidence="5">
    <original>L</original>
    <variation>A</variation>
    <location>
        <position position="218"/>
    </location>
</feature>
<feature type="mutagenesis site" description="Decreases substantially tRNA methyltransferase activity." evidence="5">
    <original>N</original>
    <variation>A</variation>
    <location>
        <position position="220"/>
    </location>
</feature>
<feature type="mutagenesis site" description="Does not affect tRNA methyltransferase activity." evidence="5">
    <original>S</original>
    <variation>A</variation>
    <location>
        <position position="223"/>
    </location>
</feature>
<feature type="mutagenesis site" description="Abolishes tRNA methyltransferase activity. Does not affect S-Adenosylmethionine binding." evidence="5">
    <original>K</original>
    <variation>A</variation>
    <location>
        <position position="248"/>
    </location>
</feature>
<feature type="mutagenesis site" description="Loss of S-Adenosylmethionine binding. Loss of tRNA methyltransferase activity." evidence="5">
    <original>D</original>
    <variation>A</variation>
    <location>
        <position position="266"/>
    </location>
</feature>
<feature type="mutagenesis site" description="Loss of S-Adenosylmethionine binding. Loss of tRNA methyltransferase activity." evidence="5">
    <original>K</original>
    <variation>A</variation>
    <location>
        <position position="271"/>
    </location>
</feature>
<feature type="mutagenesis site" description="Loss of S-Adenosylmethionine binding. Loss of tRNA methyltransferase activity." evidence="5">
    <original>D</original>
    <variation>A</variation>
    <location>
        <position position="293"/>
    </location>
</feature>
<feature type="mutagenesis site" description="Abolishes tRNA methyltransferase activity. Abolishes S-Adenosylmethionine binding." evidence="5">
    <original>D</original>
    <variation>A</variation>
    <location>
        <position position="323"/>
    </location>
</feature>
<feature type="mutagenesis site" description="Does not impair target RNA binding. Abolishes tRNA (cytosine-5-)-methyltransferase activity." evidence="3 5">
    <original>C</original>
    <variation>A</variation>
    <location>
        <position position="373"/>
    </location>
</feature>
<feature type="mutagenesis site" description="Abolishes tRNA methyltransferase activity." evidence="5">
    <original>F</original>
    <variation>A</variation>
    <location>
        <position position="458"/>
    </location>
</feature>
<feature type="helix" evidence="14">
    <location>
        <begin position="11"/>
        <end position="21"/>
    </location>
</feature>
<feature type="helix" evidence="14">
    <location>
        <begin position="24"/>
        <end position="30"/>
    </location>
</feature>
<feature type="helix" evidence="14">
    <location>
        <begin position="32"/>
        <end position="45"/>
    </location>
</feature>
<feature type="strand" evidence="14">
    <location>
        <begin position="46"/>
        <end position="48"/>
    </location>
</feature>
<feature type="strand" evidence="14">
    <location>
        <begin position="51"/>
        <end position="57"/>
    </location>
</feature>
<feature type="turn" evidence="14">
    <location>
        <begin position="59"/>
        <end position="61"/>
    </location>
</feature>
<feature type="helix" evidence="14">
    <location>
        <begin position="64"/>
        <end position="78"/>
    </location>
</feature>
<feature type="turn" evidence="14">
    <location>
        <begin position="79"/>
        <end position="81"/>
    </location>
</feature>
<feature type="strand" evidence="14">
    <location>
        <begin position="90"/>
        <end position="92"/>
    </location>
</feature>
<feature type="strand" evidence="14">
    <location>
        <begin position="95"/>
        <end position="99"/>
    </location>
</feature>
<feature type="strand" evidence="14">
    <location>
        <begin position="111"/>
        <end position="116"/>
    </location>
</feature>
<feature type="helix" evidence="14">
    <location>
        <begin position="118"/>
        <end position="126"/>
    </location>
</feature>
<feature type="helix" evidence="14">
    <location>
        <begin position="132"/>
        <end position="134"/>
    </location>
</feature>
<feature type="strand" evidence="14">
    <location>
        <begin position="135"/>
        <end position="138"/>
    </location>
</feature>
<feature type="strand" evidence="14">
    <location>
        <begin position="147"/>
        <end position="153"/>
    </location>
</feature>
<feature type="strand" evidence="14">
    <location>
        <begin position="169"/>
        <end position="179"/>
    </location>
</feature>
<feature type="helix" evidence="14">
    <location>
        <begin position="181"/>
        <end position="184"/>
    </location>
</feature>
<feature type="strand" evidence="14">
    <location>
        <begin position="195"/>
        <end position="204"/>
    </location>
</feature>
<feature type="strand" evidence="14">
    <location>
        <begin position="209"/>
        <end position="211"/>
    </location>
</feature>
<feature type="turn" evidence="14">
    <location>
        <begin position="213"/>
        <end position="215"/>
    </location>
</feature>
<feature type="strand" evidence="14">
    <location>
        <begin position="216"/>
        <end position="218"/>
    </location>
</feature>
<feature type="helix" evidence="14">
    <location>
        <begin position="221"/>
        <end position="230"/>
    </location>
</feature>
<feature type="strand" evidence="14">
    <location>
        <begin position="237"/>
        <end position="240"/>
    </location>
</feature>
<feature type="turn" evidence="16">
    <location>
        <begin position="244"/>
        <end position="246"/>
    </location>
</feature>
<feature type="helix" evidence="14">
    <location>
        <begin position="247"/>
        <end position="255"/>
    </location>
</feature>
<feature type="turn" evidence="14">
    <location>
        <begin position="256"/>
        <end position="258"/>
    </location>
</feature>
<feature type="strand" evidence="14">
    <location>
        <begin position="260"/>
        <end position="267"/>
    </location>
</feature>
<feature type="helix" evidence="14">
    <location>
        <begin position="269"/>
        <end position="281"/>
    </location>
</feature>
<feature type="strand" evidence="14">
    <location>
        <begin position="286"/>
        <end position="291"/>
    </location>
</feature>
<feature type="helix" evidence="14">
    <location>
        <begin position="294"/>
        <end position="296"/>
    </location>
</feature>
<feature type="strand" evidence="15">
    <location>
        <begin position="310"/>
        <end position="312"/>
    </location>
</feature>
<feature type="strand" evidence="14">
    <location>
        <begin position="317"/>
        <end position="323"/>
    </location>
</feature>
<feature type="helix" evidence="14">
    <location>
        <begin position="341"/>
        <end position="345"/>
    </location>
</feature>
<feature type="helix" evidence="14">
    <location>
        <begin position="347"/>
        <end position="361"/>
    </location>
</feature>
<feature type="strand" evidence="14">
    <location>
        <begin position="362"/>
        <end position="373"/>
    </location>
</feature>
<feature type="turn" evidence="14">
    <location>
        <begin position="378"/>
        <end position="380"/>
    </location>
</feature>
<feature type="helix" evidence="14">
    <location>
        <begin position="381"/>
        <end position="390"/>
    </location>
</feature>
<feature type="strand" evidence="14">
    <location>
        <begin position="394"/>
        <end position="396"/>
    </location>
</feature>
<feature type="strand" evidence="14">
    <location>
        <begin position="409"/>
        <end position="411"/>
    </location>
</feature>
<feature type="helix" evidence="14">
    <location>
        <begin position="415"/>
        <end position="419"/>
    </location>
</feature>
<feature type="strand" evidence="14">
    <location>
        <begin position="421"/>
        <end position="424"/>
    </location>
</feature>
<feature type="strand" evidence="14">
    <location>
        <begin position="426"/>
        <end position="429"/>
    </location>
</feature>
<feature type="helix" evidence="15">
    <location>
        <begin position="436"/>
        <end position="440"/>
    </location>
</feature>
<feature type="helix" evidence="14">
    <location>
        <begin position="444"/>
        <end position="453"/>
    </location>
</feature>
<feature type="strand" evidence="14">
    <location>
        <begin position="458"/>
        <end position="465"/>
    </location>
</feature>
<dbReference type="EC" id="2.1.1.-" evidence="3 4 5"/>
<dbReference type="EMBL" id="AK074323">
    <property type="protein sequence ID" value="BAB85051.1"/>
    <property type="molecule type" value="mRNA"/>
</dbReference>
<dbReference type="EMBL" id="EF445003">
    <property type="protein sequence ID" value="ACA06032.1"/>
    <property type="molecule type" value="Genomic_DNA"/>
</dbReference>
<dbReference type="EMBL" id="EF445003">
    <property type="protein sequence ID" value="ACA06033.1"/>
    <property type="molecule type" value="Genomic_DNA"/>
</dbReference>
<dbReference type="EMBL" id="AL512641">
    <property type="status" value="NOT_ANNOTATED_CDS"/>
    <property type="molecule type" value="Genomic_DNA"/>
</dbReference>
<dbReference type="EMBL" id="AL450384">
    <property type="status" value="NOT_ANNOTATED_CDS"/>
    <property type="molecule type" value="Genomic_DNA"/>
</dbReference>
<dbReference type="EMBL" id="CH471072">
    <property type="protein sequence ID" value="EAW86191.1"/>
    <property type="molecule type" value="Genomic_DNA"/>
</dbReference>
<dbReference type="EMBL" id="BC035778">
    <property type="protein sequence ID" value="AAH35778.1"/>
    <property type="molecule type" value="mRNA"/>
</dbReference>
<dbReference type="CCDS" id="CCDS7130.1"/>
<dbReference type="RefSeq" id="NP_872349.1">
    <property type="nucleotide sequence ID" value="NM_182543.5"/>
</dbReference>
<dbReference type="RefSeq" id="XP_054221087.1">
    <property type="nucleotide sequence ID" value="XM_054365112.1"/>
</dbReference>
<dbReference type="RefSeq" id="XP_054221088.1">
    <property type="nucleotide sequence ID" value="XM_054365113.1"/>
</dbReference>
<dbReference type="RefSeq" id="XP_054221089.1">
    <property type="nucleotide sequence ID" value="XM_054365114.1"/>
</dbReference>
<dbReference type="PDB" id="5WWQ">
    <property type="method" value="X-ray"/>
    <property type="resolution" value="2.81 A"/>
    <property type="chains" value="A/B=1-469"/>
</dbReference>
<dbReference type="PDB" id="5WWR">
    <property type="method" value="X-ray"/>
    <property type="resolution" value="3.10 A"/>
    <property type="chains" value="A/B=1-469"/>
</dbReference>
<dbReference type="PDB" id="5WWS">
    <property type="method" value="X-ray"/>
    <property type="resolution" value="3.25 A"/>
    <property type="chains" value="A/B=1-469"/>
</dbReference>
<dbReference type="PDB" id="5WWT">
    <property type="method" value="X-ray"/>
    <property type="resolution" value="3.20 A"/>
    <property type="chains" value="A/B=1-469"/>
</dbReference>
<dbReference type="PDB" id="9IMB">
    <property type="method" value="X-ray"/>
    <property type="resolution" value="2.90 A"/>
    <property type="chains" value="A/B=1-469"/>
</dbReference>
<dbReference type="PDBsum" id="5WWQ"/>
<dbReference type="PDBsum" id="5WWR"/>
<dbReference type="PDBsum" id="5WWS"/>
<dbReference type="PDBsum" id="5WWT"/>
<dbReference type="PDBsum" id="9IMB"/>
<dbReference type="SMR" id="Q8TEA1"/>
<dbReference type="BioGRID" id="128682">
    <property type="interactions" value="14"/>
</dbReference>
<dbReference type="FunCoup" id="Q8TEA1">
    <property type="interactions" value="1976"/>
</dbReference>
<dbReference type="IntAct" id="Q8TEA1">
    <property type="interactions" value="1"/>
</dbReference>
<dbReference type="STRING" id="9606.ENSP00000366519"/>
<dbReference type="ChEMBL" id="CHEMBL5169179"/>
<dbReference type="CarbonylDB" id="Q8TEA1"/>
<dbReference type="iPTMnet" id="Q8TEA1"/>
<dbReference type="PhosphoSitePlus" id="Q8TEA1"/>
<dbReference type="SwissPalm" id="Q8TEA1"/>
<dbReference type="BioMuta" id="NSUN6"/>
<dbReference type="DMDM" id="74751440"/>
<dbReference type="jPOST" id="Q8TEA1"/>
<dbReference type="MassIVE" id="Q8TEA1"/>
<dbReference type="PaxDb" id="9606-ENSP00000366519"/>
<dbReference type="PeptideAtlas" id="Q8TEA1"/>
<dbReference type="ProteomicsDB" id="74429"/>
<dbReference type="Pumba" id="Q8TEA1"/>
<dbReference type="Antibodypedia" id="25416">
    <property type="antibodies" value="126 antibodies from 25 providers"/>
</dbReference>
<dbReference type="DNASU" id="221078"/>
<dbReference type="Ensembl" id="ENST00000377304.7">
    <property type="protein sequence ID" value="ENSP00000366519.4"/>
    <property type="gene ID" value="ENSG00000241058.4"/>
</dbReference>
<dbReference type="GeneID" id="221078"/>
<dbReference type="KEGG" id="hsa:221078"/>
<dbReference type="MANE-Select" id="ENST00000377304.7">
    <property type="protein sequence ID" value="ENSP00000366519.4"/>
    <property type="RefSeq nucleotide sequence ID" value="NM_182543.5"/>
    <property type="RefSeq protein sequence ID" value="NP_872349.1"/>
</dbReference>
<dbReference type="UCSC" id="uc010qcp.2">
    <property type="organism name" value="human"/>
</dbReference>
<dbReference type="AGR" id="HGNC:23529"/>
<dbReference type="CTD" id="221078"/>
<dbReference type="DisGeNET" id="221078"/>
<dbReference type="GeneCards" id="NSUN6"/>
<dbReference type="HGNC" id="HGNC:23529">
    <property type="gene designation" value="NSUN6"/>
</dbReference>
<dbReference type="HPA" id="ENSG00000241058">
    <property type="expression patterns" value="Tissue enhanced (liver)"/>
</dbReference>
<dbReference type="MalaCards" id="NSUN6"/>
<dbReference type="MIM" id="617199">
    <property type="type" value="gene"/>
</dbReference>
<dbReference type="MIM" id="620779">
    <property type="type" value="phenotype"/>
</dbReference>
<dbReference type="neXtProt" id="NX_Q8TEA1"/>
<dbReference type="OpenTargets" id="ENSG00000241058"/>
<dbReference type="PharmGKB" id="PA134986220"/>
<dbReference type="VEuPathDB" id="HostDB:ENSG00000241058"/>
<dbReference type="eggNOG" id="KOG1122">
    <property type="taxonomic scope" value="Eukaryota"/>
</dbReference>
<dbReference type="GeneTree" id="ENSGT00940000155370"/>
<dbReference type="HOGENOM" id="CLU_005316_1_1_1"/>
<dbReference type="InParanoid" id="Q8TEA1"/>
<dbReference type="OMA" id="YQGAMLY"/>
<dbReference type="OrthoDB" id="260824at2759"/>
<dbReference type="PAN-GO" id="Q8TEA1">
    <property type="GO annotations" value="1 GO annotation based on evolutionary models"/>
</dbReference>
<dbReference type="PhylomeDB" id="Q8TEA1"/>
<dbReference type="TreeFam" id="TF324225"/>
<dbReference type="BRENDA" id="2.1.1.202">
    <property type="organism ID" value="2681"/>
</dbReference>
<dbReference type="PathwayCommons" id="Q8TEA1"/>
<dbReference type="Reactome" id="R-HSA-6782315">
    <property type="pathway name" value="tRNA modification in the nucleus and cytosol"/>
</dbReference>
<dbReference type="SignaLink" id="Q8TEA1"/>
<dbReference type="BioGRID-ORCS" id="221078">
    <property type="hits" value="13 hits in 1156 CRISPR screens"/>
</dbReference>
<dbReference type="ChiTaRS" id="NSUN6">
    <property type="organism name" value="human"/>
</dbReference>
<dbReference type="GenomeRNAi" id="221078"/>
<dbReference type="Pharos" id="Q8TEA1">
    <property type="development level" value="Tbio"/>
</dbReference>
<dbReference type="PRO" id="PR:Q8TEA1"/>
<dbReference type="Proteomes" id="UP000005640">
    <property type="component" value="Chromosome 10"/>
</dbReference>
<dbReference type="RNAct" id="Q8TEA1">
    <property type="molecule type" value="protein"/>
</dbReference>
<dbReference type="Bgee" id="ENSG00000241058">
    <property type="expression patterns" value="Expressed in oviduct epithelium and 147 other cell types or tissues"/>
</dbReference>
<dbReference type="ExpressionAtlas" id="Q8TEA1">
    <property type="expression patterns" value="baseline and differential"/>
</dbReference>
<dbReference type="GO" id="GO:0005737">
    <property type="term" value="C:cytoplasm"/>
    <property type="evidence" value="ECO:0000314"/>
    <property type="project" value="GO_Central"/>
</dbReference>
<dbReference type="GO" id="GO:0005829">
    <property type="term" value="C:cytosol"/>
    <property type="evidence" value="ECO:0000304"/>
    <property type="project" value="Reactome"/>
</dbReference>
<dbReference type="GO" id="GO:0016428">
    <property type="term" value="F:tRNA (cytidine-5-)-methyltransferase activity"/>
    <property type="evidence" value="ECO:0000314"/>
    <property type="project" value="UniProtKB"/>
</dbReference>
<dbReference type="GO" id="GO:0000049">
    <property type="term" value="F:tRNA binding"/>
    <property type="evidence" value="ECO:0000314"/>
    <property type="project" value="UniProtKB"/>
</dbReference>
<dbReference type="GO" id="GO:0001510">
    <property type="term" value="P:RNA methylation"/>
    <property type="evidence" value="ECO:0000318"/>
    <property type="project" value="GO_Central"/>
</dbReference>
<dbReference type="GO" id="GO:0002946">
    <property type="term" value="P:tRNA C5-cytosine methylation"/>
    <property type="evidence" value="ECO:0000314"/>
    <property type="project" value="UniProtKB"/>
</dbReference>
<dbReference type="GO" id="GO:0030488">
    <property type="term" value="P:tRNA methylation"/>
    <property type="evidence" value="ECO:0000314"/>
    <property type="project" value="UniProtKB"/>
</dbReference>
<dbReference type="GO" id="GO:0006400">
    <property type="term" value="P:tRNA modification"/>
    <property type="evidence" value="ECO:0000314"/>
    <property type="project" value="FlyBase"/>
</dbReference>
<dbReference type="CDD" id="cd02440">
    <property type="entry name" value="AdoMet_MTases"/>
    <property type="match status" value="1"/>
</dbReference>
<dbReference type="CDD" id="cd21150">
    <property type="entry name" value="PUA_NSun6-like"/>
    <property type="match status" value="1"/>
</dbReference>
<dbReference type="FunFam" id="3.40.50.150:FF:000490">
    <property type="entry name" value="putative methyltransferase NSUN6 isoform X1"/>
    <property type="match status" value="1"/>
</dbReference>
<dbReference type="FunFam" id="2.30.130.10:FF:000006">
    <property type="entry name" value="putative methyltransferase NSUN6 isoform X2"/>
    <property type="match status" value="1"/>
</dbReference>
<dbReference type="Gene3D" id="2.30.130.10">
    <property type="entry name" value="PUA domain"/>
    <property type="match status" value="1"/>
</dbReference>
<dbReference type="Gene3D" id="3.40.50.150">
    <property type="entry name" value="Vaccinia Virus protein VP39"/>
    <property type="match status" value="1"/>
</dbReference>
<dbReference type="InterPro" id="IPR049560">
    <property type="entry name" value="MeTrfase_RsmB-F_NOP2_cat"/>
</dbReference>
<dbReference type="InterPro" id="IPR001678">
    <property type="entry name" value="MeTrfase_RsmB-F_NOP2_dom"/>
</dbReference>
<dbReference type="InterPro" id="IPR015947">
    <property type="entry name" value="PUA-like_sf"/>
</dbReference>
<dbReference type="InterPro" id="IPR036974">
    <property type="entry name" value="PUA_sf"/>
</dbReference>
<dbReference type="InterPro" id="IPR023267">
    <property type="entry name" value="RCMT"/>
</dbReference>
<dbReference type="InterPro" id="IPR018314">
    <property type="entry name" value="RsmB/NOL1/NOP2-like_CS"/>
</dbReference>
<dbReference type="InterPro" id="IPR029063">
    <property type="entry name" value="SAM-dependent_MTases_sf"/>
</dbReference>
<dbReference type="PANTHER" id="PTHR22807">
    <property type="entry name" value="NOP2 YEAST -RELATED NOL1/NOP2/FMU SUN DOMAIN-CONTAINING"/>
    <property type="match status" value="1"/>
</dbReference>
<dbReference type="PANTHER" id="PTHR22807:SF34">
    <property type="entry name" value="TRNA (CYTOSINE(72)-C(5))-METHYLTRANSFERASE NSUN6"/>
    <property type="match status" value="1"/>
</dbReference>
<dbReference type="Pfam" id="PF01189">
    <property type="entry name" value="Methyltr_RsmB-F"/>
    <property type="match status" value="1"/>
</dbReference>
<dbReference type="PRINTS" id="PR02008">
    <property type="entry name" value="RCMTFAMILY"/>
</dbReference>
<dbReference type="SUPFAM" id="SSF88697">
    <property type="entry name" value="PUA domain-like"/>
    <property type="match status" value="1"/>
</dbReference>
<dbReference type="SUPFAM" id="SSF53335">
    <property type="entry name" value="S-adenosyl-L-methionine-dependent methyltransferases"/>
    <property type="match status" value="1"/>
</dbReference>
<dbReference type="PROSITE" id="PS01153">
    <property type="entry name" value="NOL1_NOP2_SUN"/>
    <property type="match status" value="1"/>
</dbReference>
<dbReference type="PROSITE" id="PS50890">
    <property type="entry name" value="PUA"/>
    <property type="match status" value="1"/>
</dbReference>
<dbReference type="PROSITE" id="PS51686">
    <property type="entry name" value="SAM_MT_RSMB_NOP"/>
    <property type="match status" value="1"/>
</dbReference>
<comment type="function">
    <text evidence="3 4 5">S-adenosyl-L-methionine-dependent methyltransferase that specifically methylates the C5 position of cytosine 72 in tRNA(Thr)(TGT) and tRNA(Cys)(GCA) (PubMed:26160102, PubMed:27703015, PubMed:28531330). In vitro also methylates tRNA(Thr)(AGT) (PubMed:26160102, PubMed:27703015). Methylation requires, in the acceptor stem region, the presence of the 3'-CCA terminus, the target site C72, the discriminator base U73, and the second and third base pairs (2:71 and 3:70) in the tRNA substrates (PubMed:26160102, PubMed:27703015).</text>
</comment>
<comment type="catalytic activity">
    <reaction evidence="3 4">
        <text>cytidine(72) in tRNA(Thr) + S-adenosyl-L-methionine = 5-methylcytidine(72) in tRNA(Thr) + S-adenosyl-L-homocysteine + H(+)</text>
        <dbReference type="Rhea" id="RHEA:21124"/>
        <dbReference type="Rhea" id="RHEA-COMP:15877"/>
        <dbReference type="Rhea" id="RHEA-COMP:15878"/>
        <dbReference type="ChEBI" id="CHEBI:15378"/>
        <dbReference type="ChEBI" id="CHEBI:57856"/>
        <dbReference type="ChEBI" id="CHEBI:59789"/>
        <dbReference type="ChEBI" id="CHEBI:74483"/>
        <dbReference type="ChEBI" id="CHEBI:82748"/>
    </reaction>
    <physiologicalReaction direction="left-to-right" evidence="3 4">
        <dbReference type="Rhea" id="RHEA:21125"/>
    </physiologicalReaction>
</comment>
<comment type="catalytic activity">
    <reaction evidence="3 4 5">
        <text>cytidine(72) in tRNA(Cys) + S-adenosyl-L-methionine = 5-methylcytidine(72) in tRNA(Cys) + S-adenosyl-L-homocysteine + H(+)</text>
        <dbReference type="Rhea" id="RHEA:61584"/>
        <dbReference type="Rhea" id="RHEA-COMP:15875"/>
        <dbReference type="Rhea" id="RHEA-COMP:15876"/>
        <dbReference type="ChEBI" id="CHEBI:15378"/>
        <dbReference type="ChEBI" id="CHEBI:57856"/>
        <dbReference type="ChEBI" id="CHEBI:59789"/>
        <dbReference type="ChEBI" id="CHEBI:74483"/>
        <dbReference type="ChEBI" id="CHEBI:82748"/>
    </reaction>
    <physiologicalReaction direction="left-to-right" evidence="3 4 5">
        <dbReference type="Rhea" id="RHEA:61585"/>
    </physiologicalReaction>
</comment>
<comment type="biophysicochemical properties">
    <kinetics>
        <KM evidence="4">3.02 uM for tRNA(Thr)(TGT)</KM>
        <KM evidence="4">1.58 uM for tRNA(Thr)(AGT)</KM>
        <KM evidence="4">0.89 uM for tRNA(Cys)(GCA)</KM>
    </kinetics>
</comment>
<comment type="subcellular location">
    <subcellularLocation>
        <location evidence="3">Cytoplasm</location>
    </subcellularLocation>
</comment>
<comment type="domain">
    <text evidence="5">The PUA domain plays a role in tRNA recognition through precisely recognizing the CCA end and the D-stem region of tRNA.</text>
</comment>
<comment type="disease" evidence="6">
    <disease id="DI-06876">
        <name>Intellectual developmental disorder, autosomal recessive 82</name>
        <acronym>MRT82</acronym>
        <description>An autosomal recessive disorder characterized by developmental delay, motor and speech delay, intellectual disability, and behavioral anomalies.</description>
        <dbReference type="MIM" id="620779"/>
    </disease>
    <text>The disease may be caused by variants affecting the gene represented in this entry.</text>
</comment>
<comment type="similarity">
    <text evidence="2">Belongs to the class I-like SAM-binding methyltransferase superfamily. RsmB/NOP family.</text>
</comment>
<sequence length="469" mass="51770">MSIFPKISLRPEVENYLKEGFMNKEIVTALGKQEAERKFETLLKHLSHPPSFTTVRVNTHLASVQHVKNLLLDELQKQFNGLSVPILQHPDLQDVLLIPVIGPRKNIKKQQCEAIVGAQCGNAVLRGAHVYAPGIVSASQFMKAGDVISVYSDIKGKCKKGAKEFDGTKVFLGNGISELSRKEIFSGLPELKGMGIRMTEPVYLSPSFDSVLPRYLFLQNLPSALVSHVLNPQPGEKILDLCAAPGGKTTHIAALMHDQGEVIALDKIFNKVEKIKQNALLLGLNSIRAFCFDGTKAVKLDMVEDTEGEPPFLPESFDRILLDAPCSGMGQRPNMACTWSVKEVASYQPLQRKLFTAAVQLLKPEGVLVYSTCTITLAENEEQVAWALTKFPCLQLQPQEPQIGGEGMRGAGLSCEQLKQLQRFDPSAVPLPDTDMDSLREARREDMLRLANKDSIGFFIAKFVKCKST</sequence>
<reference key="1">
    <citation type="journal article" date="2004" name="Nat. Genet.">
        <title>Complete sequencing and characterization of 21,243 full-length human cDNAs.</title>
        <authorList>
            <person name="Ota T."/>
            <person name="Suzuki Y."/>
            <person name="Nishikawa T."/>
            <person name="Otsuki T."/>
            <person name="Sugiyama T."/>
            <person name="Irie R."/>
            <person name="Wakamatsu A."/>
            <person name="Hayashi K."/>
            <person name="Sato H."/>
            <person name="Nagai K."/>
            <person name="Kimura K."/>
            <person name="Makita H."/>
            <person name="Sekine M."/>
            <person name="Obayashi M."/>
            <person name="Nishi T."/>
            <person name="Shibahara T."/>
            <person name="Tanaka T."/>
            <person name="Ishii S."/>
            <person name="Yamamoto J."/>
            <person name="Saito K."/>
            <person name="Kawai Y."/>
            <person name="Isono Y."/>
            <person name="Nakamura Y."/>
            <person name="Nagahari K."/>
            <person name="Murakami K."/>
            <person name="Yasuda T."/>
            <person name="Iwayanagi T."/>
            <person name="Wagatsuma M."/>
            <person name="Shiratori A."/>
            <person name="Sudo H."/>
            <person name="Hosoiri T."/>
            <person name="Kaku Y."/>
            <person name="Kodaira H."/>
            <person name="Kondo H."/>
            <person name="Sugawara M."/>
            <person name="Takahashi M."/>
            <person name="Kanda K."/>
            <person name="Yokoi T."/>
            <person name="Furuya T."/>
            <person name="Kikkawa E."/>
            <person name="Omura Y."/>
            <person name="Abe K."/>
            <person name="Kamihara K."/>
            <person name="Katsuta N."/>
            <person name="Sato K."/>
            <person name="Tanikawa M."/>
            <person name="Yamazaki M."/>
            <person name="Ninomiya K."/>
            <person name="Ishibashi T."/>
            <person name="Yamashita H."/>
            <person name="Murakawa K."/>
            <person name="Fujimori K."/>
            <person name="Tanai H."/>
            <person name="Kimata M."/>
            <person name="Watanabe M."/>
            <person name="Hiraoka S."/>
            <person name="Chiba Y."/>
            <person name="Ishida S."/>
            <person name="Ono Y."/>
            <person name="Takiguchi S."/>
            <person name="Watanabe S."/>
            <person name="Yosida M."/>
            <person name="Hotuta T."/>
            <person name="Kusano J."/>
            <person name="Kanehori K."/>
            <person name="Takahashi-Fujii A."/>
            <person name="Hara H."/>
            <person name="Tanase T.-O."/>
            <person name="Nomura Y."/>
            <person name="Togiya S."/>
            <person name="Komai F."/>
            <person name="Hara R."/>
            <person name="Takeuchi K."/>
            <person name="Arita M."/>
            <person name="Imose N."/>
            <person name="Musashino K."/>
            <person name="Yuuki H."/>
            <person name="Oshima A."/>
            <person name="Sasaki N."/>
            <person name="Aotsuka S."/>
            <person name="Yoshikawa Y."/>
            <person name="Matsunawa H."/>
            <person name="Ichihara T."/>
            <person name="Shiohata N."/>
            <person name="Sano S."/>
            <person name="Moriya S."/>
            <person name="Momiyama H."/>
            <person name="Satoh N."/>
            <person name="Takami S."/>
            <person name="Terashima Y."/>
            <person name="Suzuki O."/>
            <person name="Nakagawa S."/>
            <person name="Senoh A."/>
            <person name="Mizoguchi H."/>
            <person name="Goto Y."/>
            <person name="Shimizu F."/>
            <person name="Wakebe H."/>
            <person name="Hishigaki H."/>
            <person name="Watanabe T."/>
            <person name="Sugiyama A."/>
            <person name="Takemoto M."/>
            <person name="Kawakami B."/>
            <person name="Yamazaki M."/>
            <person name="Watanabe K."/>
            <person name="Kumagai A."/>
            <person name="Itakura S."/>
            <person name="Fukuzumi Y."/>
            <person name="Fujimori Y."/>
            <person name="Komiyama M."/>
            <person name="Tashiro H."/>
            <person name="Tanigami A."/>
            <person name="Fujiwara T."/>
            <person name="Ono T."/>
            <person name="Yamada K."/>
            <person name="Fujii Y."/>
            <person name="Ozaki K."/>
            <person name="Hirao M."/>
            <person name="Ohmori Y."/>
            <person name="Kawabata A."/>
            <person name="Hikiji T."/>
            <person name="Kobatake N."/>
            <person name="Inagaki H."/>
            <person name="Ikema Y."/>
            <person name="Okamoto S."/>
            <person name="Okitani R."/>
            <person name="Kawakami T."/>
            <person name="Noguchi S."/>
            <person name="Itoh T."/>
            <person name="Shigeta K."/>
            <person name="Senba T."/>
            <person name="Matsumura K."/>
            <person name="Nakajima Y."/>
            <person name="Mizuno T."/>
            <person name="Morinaga M."/>
            <person name="Sasaki M."/>
            <person name="Togashi T."/>
            <person name="Oyama M."/>
            <person name="Hata H."/>
            <person name="Watanabe M."/>
            <person name="Komatsu T."/>
            <person name="Mizushima-Sugano J."/>
            <person name="Satoh T."/>
            <person name="Shirai Y."/>
            <person name="Takahashi Y."/>
            <person name="Nakagawa K."/>
            <person name="Okumura K."/>
            <person name="Nagase T."/>
            <person name="Nomura N."/>
            <person name="Kikuchi H."/>
            <person name="Masuho Y."/>
            <person name="Yamashita R."/>
            <person name="Nakai K."/>
            <person name="Yada T."/>
            <person name="Nakamura Y."/>
            <person name="Ohara O."/>
            <person name="Isogai T."/>
            <person name="Sugano S."/>
        </authorList>
    </citation>
    <scope>NUCLEOTIDE SEQUENCE [LARGE SCALE MRNA]</scope>
</reference>
<reference key="2">
    <citation type="submission" date="2007-02" db="EMBL/GenBank/DDBJ databases">
        <authorList>
            <consortium name="NHLBI resequencing and genotyping service (RS&amp;G)"/>
        </authorList>
    </citation>
    <scope>NUCLEOTIDE SEQUENCE [GENOMIC DNA]</scope>
</reference>
<reference key="3">
    <citation type="journal article" date="2004" name="Nature">
        <title>The DNA sequence and comparative analysis of human chromosome 10.</title>
        <authorList>
            <person name="Deloukas P."/>
            <person name="Earthrowl M.E."/>
            <person name="Grafham D.V."/>
            <person name="Rubenfield M."/>
            <person name="French L."/>
            <person name="Steward C.A."/>
            <person name="Sims S.K."/>
            <person name="Jones M.C."/>
            <person name="Searle S."/>
            <person name="Scott C."/>
            <person name="Howe K."/>
            <person name="Hunt S.E."/>
            <person name="Andrews T.D."/>
            <person name="Gilbert J.G.R."/>
            <person name="Swarbreck D."/>
            <person name="Ashurst J.L."/>
            <person name="Taylor A."/>
            <person name="Battles J."/>
            <person name="Bird C.P."/>
            <person name="Ainscough R."/>
            <person name="Almeida J.P."/>
            <person name="Ashwell R.I.S."/>
            <person name="Ambrose K.D."/>
            <person name="Babbage A.K."/>
            <person name="Bagguley C.L."/>
            <person name="Bailey J."/>
            <person name="Banerjee R."/>
            <person name="Bates K."/>
            <person name="Beasley H."/>
            <person name="Bray-Allen S."/>
            <person name="Brown A.J."/>
            <person name="Brown J.Y."/>
            <person name="Burford D.C."/>
            <person name="Burrill W."/>
            <person name="Burton J."/>
            <person name="Cahill P."/>
            <person name="Camire D."/>
            <person name="Carter N.P."/>
            <person name="Chapman J.C."/>
            <person name="Clark S.Y."/>
            <person name="Clarke G."/>
            <person name="Clee C.M."/>
            <person name="Clegg S."/>
            <person name="Corby N."/>
            <person name="Coulson A."/>
            <person name="Dhami P."/>
            <person name="Dutta I."/>
            <person name="Dunn M."/>
            <person name="Faulkner L."/>
            <person name="Frankish A."/>
            <person name="Frankland J.A."/>
            <person name="Garner P."/>
            <person name="Garnett J."/>
            <person name="Gribble S."/>
            <person name="Griffiths C."/>
            <person name="Grocock R."/>
            <person name="Gustafson E."/>
            <person name="Hammond S."/>
            <person name="Harley J.L."/>
            <person name="Hart E."/>
            <person name="Heath P.D."/>
            <person name="Ho T.P."/>
            <person name="Hopkins B."/>
            <person name="Horne J."/>
            <person name="Howden P.J."/>
            <person name="Huckle E."/>
            <person name="Hynds C."/>
            <person name="Johnson C."/>
            <person name="Johnson D."/>
            <person name="Kana A."/>
            <person name="Kay M."/>
            <person name="Kimberley A.M."/>
            <person name="Kershaw J.K."/>
            <person name="Kokkinaki M."/>
            <person name="Laird G.K."/>
            <person name="Lawlor S."/>
            <person name="Lee H.M."/>
            <person name="Leongamornlert D.A."/>
            <person name="Laird G."/>
            <person name="Lloyd C."/>
            <person name="Lloyd D.M."/>
            <person name="Loveland J."/>
            <person name="Lovell J."/>
            <person name="McLaren S."/>
            <person name="McLay K.E."/>
            <person name="McMurray A."/>
            <person name="Mashreghi-Mohammadi M."/>
            <person name="Matthews L."/>
            <person name="Milne S."/>
            <person name="Nickerson T."/>
            <person name="Nguyen M."/>
            <person name="Overton-Larty E."/>
            <person name="Palmer S.A."/>
            <person name="Pearce A.V."/>
            <person name="Peck A.I."/>
            <person name="Pelan S."/>
            <person name="Phillimore B."/>
            <person name="Porter K."/>
            <person name="Rice C.M."/>
            <person name="Rogosin A."/>
            <person name="Ross M.T."/>
            <person name="Sarafidou T."/>
            <person name="Sehra H.K."/>
            <person name="Shownkeen R."/>
            <person name="Skuce C.D."/>
            <person name="Smith M."/>
            <person name="Standring L."/>
            <person name="Sycamore N."/>
            <person name="Tester J."/>
            <person name="Thorpe A."/>
            <person name="Torcasso W."/>
            <person name="Tracey A."/>
            <person name="Tromans A."/>
            <person name="Tsolas J."/>
            <person name="Wall M."/>
            <person name="Walsh J."/>
            <person name="Wang H."/>
            <person name="Weinstock K."/>
            <person name="West A.P."/>
            <person name="Willey D.L."/>
            <person name="Whitehead S.L."/>
            <person name="Wilming L."/>
            <person name="Wray P.W."/>
            <person name="Young L."/>
            <person name="Chen Y."/>
            <person name="Lovering R.C."/>
            <person name="Moschonas N.K."/>
            <person name="Siebert R."/>
            <person name="Fechtel K."/>
            <person name="Bentley D."/>
            <person name="Durbin R.M."/>
            <person name="Hubbard T."/>
            <person name="Doucette-Stamm L."/>
            <person name="Beck S."/>
            <person name="Smith D.R."/>
            <person name="Rogers J."/>
        </authorList>
    </citation>
    <scope>NUCLEOTIDE SEQUENCE [LARGE SCALE GENOMIC DNA]</scope>
</reference>
<reference key="4">
    <citation type="submission" date="2005-09" db="EMBL/GenBank/DDBJ databases">
        <authorList>
            <person name="Mural R.J."/>
            <person name="Istrail S."/>
            <person name="Sutton G.G."/>
            <person name="Florea L."/>
            <person name="Halpern A.L."/>
            <person name="Mobarry C.M."/>
            <person name="Lippert R."/>
            <person name="Walenz B."/>
            <person name="Shatkay H."/>
            <person name="Dew I."/>
            <person name="Miller J.R."/>
            <person name="Flanigan M.J."/>
            <person name="Edwards N.J."/>
            <person name="Bolanos R."/>
            <person name="Fasulo D."/>
            <person name="Halldorsson B.V."/>
            <person name="Hannenhalli S."/>
            <person name="Turner R."/>
            <person name="Yooseph S."/>
            <person name="Lu F."/>
            <person name="Nusskern D.R."/>
            <person name="Shue B.C."/>
            <person name="Zheng X.H."/>
            <person name="Zhong F."/>
            <person name="Delcher A.L."/>
            <person name="Huson D.H."/>
            <person name="Kravitz S.A."/>
            <person name="Mouchard L."/>
            <person name="Reinert K."/>
            <person name="Remington K.A."/>
            <person name="Clark A.G."/>
            <person name="Waterman M.S."/>
            <person name="Eichler E.E."/>
            <person name="Adams M.D."/>
            <person name="Hunkapiller M.W."/>
            <person name="Myers E.W."/>
            <person name="Venter J.C."/>
        </authorList>
    </citation>
    <scope>NUCLEOTIDE SEQUENCE [LARGE SCALE GENOMIC DNA]</scope>
</reference>
<reference key="5">
    <citation type="journal article" date="2004" name="Genome Res.">
        <title>The status, quality, and expansion of the NIH full-length cDNA project: the Mammalian Gene Collection (MGC).</title>
        <authorList>
            <consortium name="The MGC Project Team"/>
        </authorList>
    </citation>
    <scope>NUCLEOTIDE SEQUENCE [LARGE SCALE MRNA]</scope>
    <source>
        <tissue>Ovary</tissue>
    </source>
</reference>
<reference key="6">
    <citation type="journal article" date="2009" name="Science">
        <title>Lysine acetylation targets protein complexes and co-regulates major cellular functions.</title>
        <authorList>
            <person name="Choudhary C."/>
            <person name="Kumar C."/>
            <person name="Gnad F."/>
            <person name="Nielsen M.L."/>
            <person name="Rehman M."/>
            <person name="Walther T.C."/>
            <person name="Olsen J.V."/>
            <person name="Mann M."/>
        </authorList>
    </citation>
    <scope>ACETYLATION [LARGE SCALE ANALYSIS] AT LYS-419</scope>
    <scope>IDENTIFICATION BY MASS SPECTROMETRY [LARGE SCALE ANALYSIS]</scope>
</reference>
<reference key="7">
    <citation type="journal article" date="2011" name="BMC Syst. Biol.">
        <title>Initial characterization of the human central proteome.</title>
        <authorList>
            <person name="Burkard T.R."/>
            <person name="Planyavsky M."/>
            <person name="Kaupe I."/>
            <person name="Breitwieser F.P."/>
            <person name="Buerckstuemmer T."/>
            <person name="Bennett K.L."/>
            <person name="Superti-Furga G."/>
            <person name="Colinge J."/>
        </authorList>
    </citation>
    <scope>IDENTIFICATION BY MASS SPECTROMETRY [LARGE SCALE ANALYSIS]</scope>
</reference>
<reference key="8">
    <citation type="journal article" date="2015" name="RNA">
        <title>NSUN6 is a human RNA methyltransferase that catalyzes formation of m5C72 in specific tRNAs.</title>
        <authorList>
            <person name="Haag S."/>
            <person name="Warda A.S."/>
            <person name="Kretschmer J."/>
            <person name="Guennigmann M.A."/>
            <person name="Hoebartner C."/>
            <person name="Bohnsack M.T."/>
        </authorList>
    </citation>
    <scope>MUTAGENESIS OF CYS-373</scope>
    <scope>FUNCTION</scope>
    <scope>CATALYTIC ACTIVITY</scope>
    <scope>SUBCELLULAR LOCATION</scope>
</reference>
<reference key="9">
    <citation type="journal article" date="2016" name="J. Biol. Chem.">
        <title>Sequence-specific and Shape-selective RNA Recognition by the Human RNA 5-Methylcytosine Methyltransferase NSun6.</title>
        <authorList>
            <person name="Long T."/>
            <person name="Li J."/>
            <person name="Li H."/>
            <person name="Zhou M."/>
            <person name="Zhou X.L."/>
            <person name="Liu R.J."/>
            <person name="Wang E.D."/>
        </authorList>
    </citation>
    <scope>FUNCTION</scope>
    <scope>CATALYTIC ACTIVITY</scope>
    <scope>BIOPHYSICOCHEMICAL PROPERTIES</scope>
</reference>
<reference evidence="9 10 11 12" key="10">
    <citation type="journal article" date="2017" name="Nucleic Acids Res.">
        <title>Structural basis for substrate binding and catalytic mechanism of a human RNA:m5C methyltransferase NSun6.</title>
        <authorList>
            <person name="Liu R.J."/>
            <person name="Long T."/>
            <person name="Li J."/>
            <person name="Li H."/>
            <person name="Wang E.D."/>
        </authorList>
    </citation>
    <scope>X-RAY CRYSTALLOGRAPHY (2.81 ANGSTROMS) IN COMPLEX WITH TRNA AND S-ADENOSYL-L-METHIONINE</scope>
    <scope>DOMAIN</scope>
    <scope>MUTAGENESIS OF ARG-126; TYR-131; LYS-159; LYS-160; ARG-181; LEU-218; ASN-220; SER-223; LYS-248; ASP-266; LYS-271; ASP-293; ASP-323 AND PHE-458</scope>
    <scope>S-ADENOSYL-L-METHIONINE BINDING</scope>
    <scope>ACTIVE SITE</scope>
    <scope>FUNCTION</scope>
    <scope>CATALYTIC ACTIVITY</scope>
</reference>
<reference key="11">
    <citation type="journal article" date="2023" name="Genet. Med.">
        <title>Biallelic variants in NSUN6 cause an autosomal recessive neurodevelopmental disorder.</title>
        <authorList>
            <person name="Mattioli F."/>
            <person name="Worpenberg L."/>
            <person name="Li C.T."/>
            <person name="Ibrahim N."/>
            <person name="Naz S."/>
            <person name="Sharif S."/>
            <person name="Firouzabadi S.G."/>
            <person name="Vosoogh S."/>
            <person name="Saraeva-Lamri R."/>
            <person name="Raymond L."/>
            <person name="Trujillo C."/>
            <person name="Guex N."/>
            <person name="Antonarakis S.E."/>
            <person name="Ansar M."/>
            <person name="Darvish H."/>
            <person name="Liu R.J."/>
            <person name="Roignant J.Y."/>
            <person name="Reymond A."/>
        </authorList>
    </citation>
    <scope>VARIANT MRT82 ASN-323</scope>
    <scope>CHARACTERIZATION OF VARIANT MRT82 ASN-323</scope>
    <scope>INVOLVEMENT IN MRT82</scope>
</reference>
<evidence type="ECO:0000255" key="1">
    <source>
        <dbReference type="PROSITE-ProRule" id="PRU00161"/>
    </source>
</evidence>
<evidence type="ECO:0000255" key="2">
    <source>
        <dbReference type="PROSITE-ProRule" id="PRU01023"/>
    </source>
</evidence>
<evidence type="ECO:0000269" key="3">
    <source>
    </source>
</evidence>
<evidence type="ECO:0000269" key="4">
    <source>
    </source>
</evidence>
<evidence type="ECO:0000269" key="5">
    <source>
    </source>
</evidence>
<evidence type="ECO:0000269" key="6">
    <source>
    </source>
</evidence>
<evidence type="ECO:0000305" key="7"/>
<evidence type="ECO:0000312" key="8">
    <source>
        <dbReference type="HGNC" id="HGNC:23529"/>
    </source>
</evidence>
<evidence type="ECO:0007744" key="9">
    <source>
        <dbReference type="PDB" id="5WWQ"/>
    </source>
</evidence>
<evidence type="ECO:0007744" key="10">
    <source>
        <dbReference type="PDB" id="5WWR"/>
    </source>
</evidence>
<evidence type="ECO:0007744" key="11">
    <source>
        <dbReference type="PDB" id="5WWS"/>
    </source>
</evidence>
<evidence type="ECO:0007744" key="12">
    <source>
        <dbReference type="PDB" id="5WWT"/>
    </source>
</evidence>
<evidence type="ECO:0007744" key="13">
    <source>
    </source>
</evidence>
<evidence type="ECO:0007829" key="14">
    <source>
        <dbReference type="PDB" id="5WWQ"/>
    </source>
</evidence>
<evidence type="ECO:0007829" key="15">
    <source>
        <dbReference type="PDB" id="5WWR"/>
    </source>
</evidence>
<evidence type="ECO:0007829" key="16">
    <source>
        <dbReference type="PDB" id="5WWS"/>
    </source>
</evidence>
<accession>Q8TEA1</accession>
<accession>B0YJ54</accession>
<protein>
    <recommendedName>
        <fullName evidence="7">tRNA (cytosine(72)-C(5))-methyltransferase NSUN6</fullName>
        <ecNumber evidence="3 4 5">2.1.1.-</ecNumber>
    </recommendedName>
    <alternativeName>
        <fullName>NOL1/NOP2/Sun and PUA domain-containing protein 1</fullName>
    </alternativeName>
    <alternativeName>
        <fullName>NOL1/NOP2/Sun domain family member 6</fullName>
    </alternativeName>
</protein>
<proteinExistence type="evidence at protein level"/>
<gene>
    <name evidence="8" type="primary">NSUN6</name>
    <name type="synonym">NOPD1</name>
</gene>
<keyword id="KW-0002">3D-structure</keyword>
<keyword id="KW-0007">Acetylation</keyword>
<keyword id="KW-0963">Cytoplasm</keyword>
<keyword id="KW-0225">Disease variant</keyword>
<keyword id="KW-0991">Intellectual disability</keyword>
<keyword id="KW-0489">Methyltransferase</keyword>
<keyword id="KW-1267">Proteomics identification</keyword>
<keyword id="KW-1185">Reference proteome</keyword>
<keyword id="KW-0694">RNA-binding</keyword>
<keyword id="KW-0949">S-adenosyl-L-methionine</keyword>
<keyword id="KW-0808">Transferase</keyword>
<name>NSUN6_HUMAN</name>
<organism>
    <name type="scientific">Homo sapiens</name>
    <name type="common">Human</name>
    <dbReference type="NCBI Taxonomy" id="9606"/>
    <lineage>
        <taxon>Eukaryota</taxon>
        <taxon>Metazoa</taxon>
        <taxon>Chordata</taxon>
        <taxon>Craniata</taxon>
        <taxon>Vertebrata</taxon>
        <taxon>Euteleostomi</taxon>
        <taxon>Mammalia</taxon>
        <taxon>Eutheria</taxon>
        <taxon>Euarchontoglires</taxon>
        <taxon>Primates</taxon>
        <taxon>Haplorrhini</taxon>
        <taxon>Catarrhini</taxon>
        <taxon>Hominidae</taxon>
        <taxon>Homo</taxon>
    </lineage>
</organism>